<reference key="1">
    <citation type="journal article" date="1986" name="J. Biol. Chem.">
        <title>Structure of the Escherichia coli K12 regulatory gene tyrR. Nucleotide sequence and sites of initiation of transcription and translation.</title>
        <authorList>
            <person name="Cornish E.C."/>
            <person name="Argyropoulos V.P."/>
            <person name="Pittard J."/>
            <person name="Davidson B.E."/>
        </authorList>
    </citation>
    <scope>NUCLEOTIDE SEQUENCE [GENOMIC DNA]</scope>
    <source>
        <strain>K12</strain>
    </source>
</reference>
<reference key="2">
    <citation type="thesis" date="1989" institute="University of Melbourne" country="Australia">
        <authorList>
            <person name="Ganesan S."/>
        </authorList>
    </citation>
    <scope>SEQUENCE REVISION</scope>
</reference>
<reference key="3">
    <citation type="journal article" date="1996" name="DNA Res.">
        <title>A 570-kb DNA sequence of the Escherichia coli K-12 genome corresponding to the 28.0-40.1 min region on the linkage map.</title>
        <authorList>
            <person name="Aiba H."/>
            <person name="Baba T."/>
            <person name="Fujita K."/>
            <person name="Hayashi K."/>
            <person name="Inada T."/>
            <person name="Isono K."/>
            <person name="Itoh T."/>
            <person name="Kasai H."/>
            <person name="Kashimoto K."/>
            <person name="Kimura S."/>
            <person name="Kitakawa M."/>
            <person name="Kitagawa M."/>
            <person name="Makino K."/>
            <person name="Miki T."/>
            <person name="Mizobuchi K."/>
            <person name="Mori H."/>
            <person name="Mori T."/>
            <person name="Motomura K."/>
            <person name="Nakade S."/>
            <person name="Nakamura Y."/>
            <person name="Nashimoto H."/>
            <person name="Nishio Y."/>
            <person name="Oshima T."/>
            <person name="Saito N."/>
            <person name="Sampei G."/>
            <person name="Seki Y."/>
            <person name="Sivasundaram S."/>
            <person name="Tagami H."/>
            <person name="Takeda J."/>
            <person name="Takemoto K."/>
            <person name="Takeuchi Y."/>
            <person name="Wada C."/>
            <person name="Yamamoto Y."/>
            <person name="Horiuchi T."/>
        </authorList>
    </citation>
    <scope>NUCLEOTIDE SEQUENCE [LARGE SCALE GENOMIC DNA]</scope>
    <source>
        <strain>K12 / W3110 / ATCC 27325 / DSM 5911</strain>
    </source>
</reference>
<reference key="4">
    <citation type="journal article" date="1997" name="Science">
        <title>The complete genome sequence of Escherichia coli K-12.</title>
        <authorList>
            <person name="Blattner F.R."/>
            <person name="Plunkett G. III"/>
            <person name="Bloch C.A."/>
            <person name="Perna N.T."/>
            <person name="Burland V."/>
            <person name="Riley M."/>
            <person name="Collado-Vides J."/>
            <person name="Glasner J.D."/>
            <person name="Rode C.K."/>
            <person name="Mayhew G.F."/>
            <person name="Gregor J."/>
            <person name="Davis N.W."/>
            <person name="Kirkpatrick H.A."/>
            <person name="Goeden M.A."/>
            <person name="Rose D.J."/>
            <person name="Mau B."/>
            <person name="Shao Y."/>
        </authorList>
    </citation>
    <scope>NUCLEOTIDE SEQUENCE [LARGE SCALE GENOMIC DNA]</scope>
    <source>
        <strain>K12 / MG1655 / ATCC 47076</strain>
    </source>
</reference>
<reference key="5">
    <citation type="journal article" date="2006" name="Mol. Syst. Biol.">
        <title>Highly accurate genome sequences of Escherichia coli K-12 strains MG1655 and W3110.</title>
        <authorList>
            <person name="Hayashi K."/>
            <person name="Morooka N."/>
            <person name="Yamamoto Y."/>
            <person name="Fujita K."/>
            <person name="Isono K."/>
            <person name="Choi S."/>
            <person name="Ohtsubo E."/>
            <person name="Baba T."/>
            <person name="Wanner B.L."/>
            <person name="Mori H."/>
            <person name="Horiuchi T."/>
        </authorList>
    </citation>
    <scope>NUCLEOTIDE SEQUENCE [LARGE SCALE GENOMIC DNA]</scope>
    <source>
        <strain>K12 / W3110 / ATCC 27325 / DSM 5911</strain>
    </source>
</reference>
<reference key="6">
    <citation type="journal article" date="1994" name="J. Biol. Chem.">
        <title>Purification of the Escherichia coli regulatory protein TyrR and analysis of its interactions with ATP, tyrosine, phenylalanine, and tryptophan.</title>
        <authorList>
            <person name="Argaet V.P."/>
            <person name="Wilson T.J."/>
            <person name="Davidson B.E."/>
        </authorList>
    </citation>
    <scope>PROTEIN SEQUENCE OF 1-16</scope>
    <scope>FUNCTION</scope>
    <scope>ACTIVITY REGULATION</scope>
    <scope>SUBUNIT</scope>
</reference>
<reference key="7">
    <citation type="journal article" date="1969" name="J. Bacteriol.">
        <title>Regulator gene controlling enzymes concerned in tyrosine biosynthesis in Escherichia coli.</title>
        <authorList>
            <person name="Wallace B.J."/>
            <person name="Pittard J."/>
        </authorList>
    </citation>
    <scope>FUNCTION IN REGULATION OF TYROSINE BIOSYNTHESIS</scope>
    <source>
        <strain>K12</strain>
    </source>
</reference>
<reference key="8">
    <citation type="journal article" date="1971" name="J. Bacteriol.">
        <title>Repression of aromatic amino acid biosynthesis in Escherichia coli K-12.</title>
        <authorList>
            <person name="Brown K.D."/>
            <person name="Somerville R.L."/>
        </authorList>
    </citation>
    <scope>FUNCTION IN REGULATION OF AROMATIC AMINO ACID BIOSYNTHESIS</scope>
</reference>
<reference key="9">
    <citation type="journal article" date="1977" name="J. Bacteriol.">
        <title>Regulation of aromatic amino acid transport systems in Escherichia coli K-12.</title>
        <authorList>
            <person name="Whipp M.J."/>
            <person name="Pittard A.J."/>
        </authorList>
    </citation>
    <scope>FUNCTION IN REGULATION OF AROMATIC AMINO ACID TRANSPORT</scope>
    <source>
        <strain>K12</strain>
    </source>
</reference>
<reference key="10">
    <citation type="journal article" date="1982" name="J. Bacteriol.">
        <title>Autoregulation of the tyrR gene.</title>
        <authorList>
            <person name="Camakaris H."/>
            <person name="Pittard J."/>
        </authorList>
    </citation>
    <scope>INDUCTION</scope>
    <source>
        <strain>K12</strain>
    </source>
</reference>
<reference key="11">
    <citation type="journal article" date="1991" name="J. Bacteriol.">
        <title>Mutational analysis of repression and activation of the tyrP gene in Escherichia coli.</title>
        <authorList>
            <person name="Andrews A.E."/>
            <person name="Lawley B."/>
            <person name="Pittard A.J."/>
        </authorList>
    </citation>
    <scope>FUNCTION IN TYRP REGULATION</scope>
    <scope>DNA-BINDING</scope>
    <source>
        <strain>K12</strain>
    </source>
</reference>
<reference key="12">
    <citation type="journal article" date="1991" name="J. Bacteriol.">
        <title>Regulation of expression of the Escherichia coli K-12 mtr gene by TyrR protein and Trp repressor.</title>
        <authorList>
            <person name="Sarsero J.P."/>
            <person name="Wookey P.J."/>
            <person name="Pittard A.J."/>
        </authorList>
    </citation>
    <scope>FUNCTION IN MTR ACTIVATION</scope>
</reference>
<reference key="13">
    <citation type="journal article" date="1993" name="J. Bacteriol.">
        <title>A genetic analysis of various functions of the TyrR protein of Escherichia coli.</title>
        <authorList>
            <person name="Yang J."/>
            <person name="Ganesan S."/>
            <person name="Sarsero J."/>
            <person name="Pittard A.J."/>
        </authorList>
    </citation>
    <scope>FUNCTION</scope>
    <scope>DNA-BINDING</scope>
    <scope>DOMAIN</scope>
</reference>
<reference key="14">
    <citation type="journal article" date="1993" name="J. Bacteriol.">
        <title>Mutations in the tyrR gene of Escherichia coli which affect TyrR-mediated activation but not TyrR-mediated repression.</title>
        <authorList>
            <person name="Yang J."/>
            <person name="Camakaris H."/>
            <person name="Pittard A.J."/>
        </authorList>
    </citation>
    <scope>FUNCTION AS AN ACTIVATOR</scope>
    <scope>DOMAIN</scope>
    <scope>MUTAGENESIS OF ARG-2; VAL-5; CYS-7; ASP-9; ARG-10 AND GLU-16</scope>
</reference>
<reference key="15">
    <citation type="journal article" date="1993" name="J. Biol. Chem.">
        <title>The TyrR protein of Escherichia coli, analysis by limited proteolysis of domain structure and ligand-mediated conformational changes.</title>
        <authorList>
            <person name="Cui J."/>
            <person name="Somerville R.L."/>
        </authorList>
    </citation>
    <scope>DOMAINS</scope>
    <scope>PARTIAL PROTEIN SEQUENCE</scope>
</reference>
<reference key="16">
    <citation type="journal article" date="1994" name="J. Bacteriol.">
        <title>Regulation of aroL expression by TyrR protein and Trp repressor in Escherichia coli K-12.</title>
        <authorList>
            <person name="Lawley B."/>
            <person name="Pittard A.J."/>
        </authorList>
    </citation>
    <scope>FUNCTION</scope>
    <scope>DNA-BINDING</scope>
    <source>
        <strain>K12</strain>
    </source>
</reference>
<reference key="17">
    <citation type="journal article" date="1994" name="J. Mol. Biol.">
        <title>Ligand-induced self-association of the Escherichia coli regulatory protein TyrR.</title>
        <authorList>
            <person name="Wilson T.J."/>
            <person name="Maroudas P."/>
            <person name="Howlett G.J."/>
            <person name="Davidson B.E."/>
        </authorList>
    </citation>
    <scope>SUBUNIT</scope>
</reference>
<reference key="18">
    <citation type="journal article" date="1995" name="J. Bacteriol.">
        <title>The TyrR protein of Escherichia coli is a class I transcription activator.</title>
        <authorList>
            <person name="Lawley B."/>
            <person name="Fujita N."/>
            <person name="Ishihama A."/>
            <person name="Pittard A.J."/>
        </authorList>
    </citation>
    <scope>FUNCTION IN TYRP REGULATION</scope>
</reference>
<reference key="19">
    <citation type="journal article" date="1996" name="J. Mol. Biol.">
        <title>The effect of self-association on the interaction of the Escherichia coli regulatory protein TyrR with DNA.</title>
        <authorList>
            <person name="Bailey M.F."/>
            <person name="Davidson B.E."/>
            <person name="Minton A.P."/>
            <person name="Sawyer W.H."/>
            <person name="Howlett G.J."/>
        </authorList>
    </citation>
    <scope>FUNCTION</scope>
    <scope>SUBUNIT</scope>
</reference>
<reference key="20">
    <citation type="journal article" date="1999" name="J. Bacteriol.">
        <title>Specific contacts between residues in the DNA-binding domain of the TyrR protein and bases in the operator of the tyrP gene of Escherichia coli.</title>
        <authorList>
            <person name="Hwang J.S."/>
            <person name="Yang J."/>
            <person name="Pittard A.J."/>
        </authorList>
    </citation>
    <scope>FUNCTION</scope>
    <scope>DOMAIN</scope>
    <scope>MUTAGENESIS OF HIS-494 AND THR-495</scope>
</reference>
<reference key="21">
    <citation type="journal article" date="2002" name="J. Biol. Chem.">
        <title>The central domain of Escherichia coli TyrR is responsible for hexamerization associated with tyrosine-mediated repression of gene expression.</title>
        <authorList>
            <person name="Dixon M.P."/>
            <person name="Pau R.N."/>
            <person name="Howlett G.J."/>
            <person name="Dunstan D.E."/>
            <person name="Sawyer W.H."/>
            <person name="Davidson B.E."/>
        </authorList>
    </citation>
    <scope>SUBUNIT</scope>
    <scope>DOMAIN</scope>
</reference>
<reference key="22">
    <citation type="journal article" date="2003" name="Sheng Wu Hua Xue Yu Sheng Wu Wu Li Xue Bao">
        <title>Regulation of aroP expression by tyrR gene in Escherichia coli.</title>
        <authorList>
            <person name="Wang J.G."/>
            <person name="Fan C.S."/>
            <person name="Wu Y.Q."/>
            <person name="Jin R.L."/>
            <person name="Liu D.X."/>
            <person name="Shang L."/>
            <person name="Jiang P.H."/>
        </authorList>
    </citation>
    <scope>FUNCTION IN AROP REGULATION</scope>
</reference>
<reference key="23">
    <citation type="journal article" date="2004" name="Mol. Microbiol.">
        <title>Mode of action of the TyrR protein: repression and activation of the tyrP promoter of Escherichia coli.</title>
        <authorList>
            <person name="Yang J."/>
            <person name="Hwang J.S."/>
            <person name="Camakaris H."/>
            <person name="Irawaty W."/>
            <person name="Ishihama A."/>
            <person name="Pittard J."/>
        </authorList>
    </citation>
    <scope>FUNCTION IN TYRP REGULATION</scope>
    <scope>DNA-BINDING</scope>
</reference>
<reference key="24">
    <citation type="journal article" date="2019" name="Biotechnol. Lett.">
        <title>Pinpointing the L-phenylalanine binding sites of TyrR using biosensors and computer-aided simulation.</title>
        <authorList>
            <person name="Bai D."/>
            <person name="Ding D."/>
            <person name="Li J."/>
            <person name="Cong L."/>
            <person name="Zhang D."/>
        </authorList>
    </citation>
    <scope>DOMAIN</scope>
    <scope>MUTAGENESIS OF GLU-160; HIS-173; THR-176 AND SER-184</scope>
</reference>
<reference key="25">
    <citation type="journal article" date="1991" name="Mol. Microbiol.">
        <title>TyrR protein of Escherichia coli and its role as repressor and activator.</title>
        <authorList>
            <person name="Pittard A.J."/>
            <person name="Davidson B.E."/>
        </authorList>
    </citation>
    <scope>REVIEW</scope>
</reference>
<reference key="26">
    <citation type="journal article" date="2005" name="Mol. Microbiol.">
        <title>The TyrR regulon.</title>
        <authorList>
            <person name="Pittard J."/>
            <person name="Camakaris H."/>
            <person name="Yang J."/>
        </authorList>
    </citation>
    <scope>REVIEW</scope>
</reference>
<reference evidence="28" key="27">
    <citation type="journal article" date="2007" name="J. Mol. Biol.">
        <title>Crystal structure of the N-terminal domain of the TyrR transcription factor responsible for gene regulation of aromatic amino acid biosynthesis and transport in Escherichia coli K12.</title>
        <authorList>
            <person name="Verger D."/>
            <person name="Carr P.D."/>
            <person name="Kwok T."/>
            <person name="Ollis D.L."/>
        </authorList>
    </citation>
    <scope>X-RAY CRYSTALLOGRAPHY (2.30 ANGSTROMS) OF 1-190</scope>
    <scope>DOMAIN</scope>
</reference>
<sequence length="513" mass="57656">MRLEVFCEDRLGLTRELLDLLVLRGIDLRGIEIDPIGRIYLNFAELEFESFSSLMAEIRRIAGVTDVRTVPWMPSEREHLALSALLEALPEPVLSVDMKSKVDMANPASCQLFGQKLDRLRNHTAAQLINGFNFLRWLESEPQDSHNEHVVINGQNFLMEITPVYLQDENDQHVLTGAVVMLRSTIRMGRQLQNVAAQDVSAFSQIVAVSPKMKHVVEQAQKLAMLSAPLLITGDTGTGKDLFAYACHQASPRAGKPYLALNCASIPEDAVESELFGHAPEGKKGFFEQANGGSVLLDEIGEMSPRMQAKLLRFLNDGTFRRVGEDHEVHVDVRVICATQKNLVELVQKGMFREDLYYRLNVLTLNLPPLRDCPQDIMPLTELFVARFADEQGVPRPKLAADLNTVLTRYAWPGNVRQLKNAIYRALTQLDGYELRPQDILLPDYDAATVAVGEDAMEGSLDEITSRFERSVLTQLYRNYPSTRKLAKRLGVSHTAIANKLREYGLSQKKNEE</sequence>
<feature type="chain" id="PRO_0000081339" description="HTH-type transcriptional regulatory protein TyrR">
    <location>
        <begin position="1"/>
        <end position="513"/>
    </location>
</feature>
<feature type="domain" description="ACT" evidence="3">
    <location>
        <begin position="2"/>
        <end position="72"/>
    </location>
</feature>
<feature type="domain" description="PAS" evidence="1">
    <location>
        <begin position="78"/>
        <end position="114"/>
    </location>
</feature>
<feature type="domain" description="Sigma-54 factor interaction" evidence="2">
    <location>
        <begin position="206"/>
        <end position="428"/>
    </location>
</feature>
<feature type="DNA-binding region" description="H-T-H motif" evidence="27">
    <location>
        <begin position="482"/>
        <end position="502"/>
    </location>
</feature>
<feature type="binding site" evidence="2">
    <location>
        <begin position="234"/>
        <end position="241"/>
    </location>
    <ligand>
        <name>ATP</name>
        <dbReference type="ChEBI" id="CHEBI:30616"/>
    </ligand>
</feature>
<feature type="binding site" evidence="2">
    <location>
        <begin position="290"/>
        <end position="299"/>
    </location>
    <ligand>
        <name>ATP</name>
        <dbReference type="ChEBI" id="CHEBI:30616"/>
    </ligand>
</feature>
<feature type="mutagenesis site" description="Shows a decrease in activation of expression of either mtr or tyrP. Does not affect repression of aroF." evidence="20">
    <original>R</original>
    <variation>A</variation>
    <variation>S</variation>
    <location>
        <position position="2"/>
    </location>
</feature>
<feature type="mutagenesis site" description="Shows no activation of expression of either mtr or tyrP. Does not affect repression of aroF." evidence="20">
    <original>V</original>
    <variation>P</variation>
    <variation>F</variation>
    <location>
        <position position="5"/>
    </location>
</feature>
<feature type="mutagenesis site" description="Shows no activation of expression of either mtr or tyrP. Does not affect repression of aroF." evidence="20">
    <original>C</original>
    <variation>R</variation>
    <location>
        <position position="7"/>
    </location>
</feature>
<feature type="mutagenesis site" description="Shows very little activation of expression of either mtr or tyrP. Does not affect repression of aroF." evidence="20">
    <original>C</original>
    <variation>S</variation>
    <location>
        <position position="7"/>
    </location>
</feature>
<feature type="mutagenesis site" description="Shows very little activation of expression of either mtr or tyrP. Does not affect repression of aroF." evidence="20">
    <original>D</original>
    <variation>R</variation>
    <location>
        <position position="9"/>
    </location>
</feature>
<feature type="mutagenesis site" description="Shows no activation of expression of either mtr or tyrP. Does not affect repression of aroF." evidence="20">
    <original>R</original>
    <variation>I</variation>
    <variation>S</variation>
    <location>
        <position position="10"/>
    </location>
</feature>
<feature type="mutagenesis site" description="Shows very little activation of expression of either mtr or tyrP. Does not affect repression of aroF." evidence="20">
    <original>E</original>
    <variation>R</variation>
    <location>
        <position position="16"/>
    </location>
</feature>
<feature type="mutagenesis site" description="Reduces the activation function to 65% of the wild-type value. Does not affect repression of aroF." evidence="11">
    <original>E</original>
    <variation>F</variation>
    <variation>L</variation>
    <location>
        <position position="160"/>
    </location>
</feature>
<feature type="mutagenesis site" description="Reduces the activation function to 73% of the wild-type value. Does not affect repression of aroF." evidence="11">
    <original>H</original>
    <variation>L</variation>
    <variation>V</variation>
    <location>
        <position position="173"/>
    </location>
</feature>
<feature type="mutagenesis site" description="Loss of activation and repression functions. May affect the overall conformation of the protein." evidence="11">
    <original>T</original>
    <variation>E</variation>
    <location>
        <position position="176"/>
    </location>
</feature>
<feature type="mutagenesis site" description="Reduces the activation function to 45% of the wild-type value. Does not affect repression of aroF." evidence="11">
    <original>S</original>
    <variation>V</variation>
    <variation>L</variation>
    <location>
        <position position="184"/>
    </location>
</feature>
<feature type="mutagenesis site" description="Loss of affinity for the tyrP promoter." evidence="4">
    <original>H</original>
    <variation>A</variation>
    <location>
        <position position="494"/>
    </location>
</feature>
<feature type="mutagenesis site" description="Decreases binding affinity for the tyrP promoter." evidence="4">
    <original>T</original>
    <variation>A</variation>
    <location>
        <position position="495"/>
    </location>
</feature>
<feature type="strand" evidence="29">
    <location>
        <begin position="2"/>
        <end position="7"/>
    </location>
</feature>
<feature type="helix" evidence="29">
    <location>
        <begin position="13"/>
        <end position="23"/>
    </location>
</feature>
<feature type="strand" evidence="29">
    <location>
        <begin position="28"/>
        <end position="34"/>
    </location>
</feature>
<feature type="turn" evidence="29">
    <location>
        <begin position="35"/>
        <end position="37"/>
    </location>
</feature>
<feature type="strand" evidence="29">
    <location>
        <begin position="38"/>
        <end position="43"/>
    </location>
</feature>
<feature type="helix" evidence="29">
    <location>
        <begin position="48"/>
        <end position="60"/>
    </location>
</feature>
<feature type="strand" evidence="29">
    <location>
        <begin position="64"/>
        <end position="71"/>
    </location>
</feature>
<feature type="turn" evidence="29">
    <location>
        <begin position="74"/>
        <end position="76"/>
    </location>
</feature>
<feature type="helix" evidence="29">
    <location>
        <begin position="77"/>
        <end position="88"/>
    </location>
</feature>
<feature type="strand" evidence="29">
    <location>
        <begin position="93"/>
        <end position="96"/>
    </location>
</feature>
<feature type="strand" evidence="29">
    <location>
        <begin position="101"/>
        <end position="105"/>
    </location>
</feature>
<feature type="helix" evidence="29">
    <location>
        <begin position="107"/>
        <end position="113"/>
    </location>
</feature>
<feature type="helix" evidence="29">
    <location>
        <begin position="117"/>
        <end position="120"/>
    </location>
</feature>
<feature type="helix" evidence="29">
    <location>
        <begin position="125"/>
        <end position="127"/>
    </location>
</feature>
<feature type="helix" evidence="29">
    <location>
        <begin position="134"/>
        <end position="139"/>
    </location>
</feature>
<feature type="strand" evidence="29">
    <location>
        <begin position="146"/>
        <end position="152"/>
    </location>
</feature>
<feature type="strand" evidence="29">
    <location>
        <begin position="155"/>
        <end position="164"/>
    </location>
</feature>
<feature type="turn" evidence="29">
    <location>
        <begin position="165"/>
        <end position="168"/>
    </location>
</feature>
<feature type="strand" evidence="29">
    <location>
        <begin position="169"/>
        <end position="176"/>
    </location>
</feature>
<feature type="helix" evidence="29">
    <location>
        <begin position="178"/>
        <end position="185"/>
    </location>
</feature>
<feature type="turn" evidence="29">
    <location>
        <begin position="186"/>
        <end position="188"/>
    </location>
</feature>
<name>TYRR_ECOLI</name>
<comment type="function">
    <text evidence="4 6 7 9 10 12 13 14 16 17 18 20 22 23">Dual transcriptional regulator of the TyrR regulon, which includes a number of genes coding for proteins involved in the biosynthesis or transport of the three aromatic amino acids, phenylalanine, tyrosine and tryptophan (PubMed:14614536, PubMed:15049824, PubMed:1860819, PubMed:334742, PubMed:4399341, PubMed:4887504, PubMed:7798138, PubMed:7961453, PubMed:8449883). These three aromatic amino acids act as effectors which bind to the TyrR protein to form an active regulatory protein (PubMed:1860819, PubMed:334742, PubMed:4399341, PubMed:7961453, PubMed:8106498). Modulates the expression of at least eight unlinked transcription units, including aroF, aroG, aroLM, aroP, mtr, tyrA, tyrB and tyrP (PubMed:14614536, PubMed:15049824, PubMed:1860819, PubMed:334742, PubMed:4399341, PubMed:4887504, PubMed:7798138, PubMed:7961453, PubMed:8449883). In most cases TyrR acts as a repressor, but positive effects have been observed on the tyrP gene, which is repressed in the presence of tyrosine and activated at high phenylalanine concentrations (PubMed:15049824, PubMed:1860819, PubMed:334742, PubMed:7798138, PubMed:8407813, PubMed:8449883). Is also involved in activation, but not repression, of mtr expression in association with phenylalanine or tyrosine (PubMed:2061290, PubMed:8407813, PubMed:8449883). Acts by binding specifically to TyrR boxes in the promoter region of the target genes (PubMed:10197993, PubMed:1860819, PubMed:7961453, PubMed:8449883, PubMed:8947567).</text>
</comment>
<comment type="activity regulation">
    <text evidence="18">Binding of ATP strongly enhances the affinity of TyrR for tyrosine.</text>
</comment>
<comment type="subunit">
    <text evidence="5 18 19 23">Homodimer (PubMed:11923293, PubMed:8106498, PubMed:8176727, PubMed:8947567). In presence of tyrosine (or high concentrations of phenylalanine or tryptophan) and ATP, it self-associates to form an hexamer (PubMed:11923293, PubMed:8176727, PubMed:8947567). At low tyrosine concentrations, homodimers can bind to certain recognition sequences referred to as 'strong TyrR boxes' (PubMed:8176727). Homohexamers are the active repressing species, interacting with two or three tyrR boxes in the targeted regulatory DNA, including 'strong TyrR boxes' and lower-affinity sites called 'weak TyrR boxes' (PubMed:8176727).</text>
</comment>
<comment type="interaction">
    <interactant intactId="EBI-559274">
        <id>P07604</id>
    </interactant>
    <interactant intactId="EBI-542707">
        <id>P06959</id>
        <label>aceF</label>
    </interactant>
    <organismsDiffer>false</organismsDiffer>
    <experiments>2</experiments>
</comment>
<comment type="subcellular location">
    <subcellularLocation>
        <location evidence="25">Cytoplasm</location>
    </subcellularLocation>
</comment>
<comment type="induction">
    <text evidence="15">Interacts with its own promoter-operator region. Autogenously regulated by a mechanism that gives similar rates of expression of tyrR irrespective of concentration of the aromatic amino acids.</text>
</comment>
<comment type="domain">
    <text evidence="4 5 8 11 20 21 22">Contains an N-terminal domain (1-190), a central domain (206-433) and a C-terminal region (444-513) (PubMed:17222426, PubMed:8444880, PubMed:8449883). The N-terminal domain is required for transcription activation functions, dimerization and ATP-independent aromatic amino acid binding (PubMed:17222426, PubMed:30680497, PubMed:8407813, PubMed:8444880, PubMed:8449883). The central domain is involved in ATP binding and hydrolysis, and is responsible for ATP-dependent tyrosine binding and hexamerization associated with tyrosine-mediated repression functions (PubMed:11923293, PubMed:8444880, PubMed:8449883). The C-terminal region contains a classical helix-turn-helix motif responsible for binding to DNA targets known as TyrR boxes (PubMed:10197993, PubMed:8449883).</text>
</comment>
<comment type="miscellaneous">
    <text evidence="26">Regulation of individual transcription units within the regulon reflects their physiological function and is determined by the position and nature of the recognition sites (TyrR boxes) associated with each of the promoters.</text>
</comment>
<protein>
    <recommendedName>
        <fullName evidence="25">HTH-type transcriptional regulatory protein TyrR</fullName>
    </recommendedName>
</protein>
<accession>P07604</accession>
<keyword id="KW-0002">3D-structure</keyword>
<keyword id="KW-0010">Activator</keyword>
<keyword id="KW-0058">Aromatic hydrocarbons catabolism</keyword>
<keyword id="KW-0067">ATP-binding</keyword>
<keyword id="KW-0963">Cytoplasm</keyword>
<keyword id="KW-0903">Direct protein sequencing</keyword>
<keyword id="KW-0238">DNA-binding</keyword>
<keyword id="KW-0547">Nucleotide-binding</keyword>
<keyword id="KW-1185">Reference proteome</keyword>
<keyword id="KW-0678">Repressor</keyword>
<keyword id="KW-0804">Transcription</keyword>
<keyword id="KW-0805">Transcription regulation</keyword>
<dbReference type="EMBL" id="M12114">
    <property type="protein sequence ID" value="AAA24706.1"/>
    <property type="molecule type" value="Genomic_DNA"/>
</dbReference>
<dbReference type="EMBL" id="U00096">
    <property type="protein sequence ID" value="AAC74405.1"/>
    <property type="molecule type" value="Genomic_DNA"/>
</dbReference>
<dbReference type="EMBL" id="AP009048">
    <property type="protein sequence ID" value="BAA14905.1"/>
    <property type="molecule type" value="Genomic_DNA"/>
</dbReference>
<dbReference type="PIR" id="A47086">
    <property type="entry name" value="RGECAY"/>
</dbReference>
<dbReference type="RefSeq" id="NP_415839.1">
    <property type="nucleotide sequence ID" value="NC_000913.3"/>
</dbReference>
<dbReference type="RefSeq" id="WP_001300658.1">
    <property type="nucleotide sequence ID" value="NZ_STEB01000005.1"/>
</dbReference>
<dbReference type="PDB" id="2JHE">
    <property type="method" value="X-ray"/>
    <property type="resolution" value="2.30 A"/>
    <property type="chains" value="A/B/C/D=1-190"/>
</dbReference>
<dbReference type="PDBsum" id="2JHE"/>
<dbReference type="BMRB" id="P07604"/>
<dbReference type="SMR" id="P07604"/>
<dbReference type="BioGRID" id="4260150">
    <property type="interactions" value="137"/>
</dbReference>
<dbReference type="DIP" id="DIP-11062N"/>
<dbReference type="FunCoup" id="P07604">
    <property type="interactions" value="33"/>
</dbReference>
<dbReference type="IntAct" id="P07604">
    <property type="interactions" value="4"/>
</dbReference>
<dbReference type="STRING" id="511145.b1323"/>
<dbReference type="jPOST" id="P07604"/>
<dbReference type="PaxDb" id="511145-b1323"/>
<dbReference type="EnsemblBacteria" id="AAC74405">
    <property type="protein sequence ID" value="AAC74405"/>
    <property type="gene ID" value="b1323"/>
</dbReference>
<dbReference type="GeneID" id="75171448"/>
<dbReference type="GeneID" id="945879"/>
<dbReference type="KEGG" id="ecj:JW1316"/>
<dbReference type="KEGG" id="eco:b1323"/>
<dbReference type="KEGG" id="ecoc:C3026_07745"/>
<dbReference type="PATRIC" id="fig|1411691.4.peg.955"/>
<dbReference type="EchoBASE" id="EB1035"/>
<dbReference type="eggNOG" id="COG3283">
    <property type="taxonomic scope" value="Bacteria"/>
</dbReference>
<dbReference type="HOGENOM" id="CLU_000445_8_2_6"/>
<dbReference type="InParanoid" id="P07604"/>
<dbReference type="OMA" id="CQNRIGI"/>
<dbReference type="OrthoDB" id="9804019at2"/>
<dbReference type="PhylomeDB" id="P07604"/>
<dbReference type="BioCyc" id="EcoCyc:PD00413"/>
<dbReference type="EvolutionaryTrace" id="P07604"/>
<dbReference type="PRO" id="PR:P07604"/>
<dbReference type="Proteomes" id="UP000000625">
    <property type="component" value="Chromosome"/>
</dbReference>
<dbReference type="GO" id="GO:0005829">
    <property type="term" value="C:cytosol"/>
    <property type="evidence" value="ECO:0000314"/>
    <property type="project" value="EcoCyc"/>
</dbReference>
<dbReference type="GO" id="GO:0032993">
    <property type="term" value="C:protein-DNA complex"/>
    <property type="evidence" value="ECO:0000318"/>
    <property type="project" value="GO_Central"/>
</dbReference>
<dbReference type="GO" id="GO:0005524">
    <property type="term" value="F:ATP binding"/>
    <property type="evidence" value="ECO:0000314"/>
    <property type="project" value="EcoCyc"/>
</dbReference>
<dbReference type="GO" id="GO:0016887">
    <property type="term" value="F:ATP hydrolysis activity"/>
    <property type="evidence" value="ECO:0007669"/>
    <property type="project" value="InterPro"/>
</dbReference>
<dbReference type="GO" id="GO:0000987">
    <property type="term" value="F:cis-regulatory region sequence-specific DNA binding"/>
    <property type="evidence" value="ECO:0000318"/>
    <property type="project" value="GO_Central"/>
</dbReference>
<dbReference type="GO" id="GO:0003677">
    <property type="term" value="F:DNA binding"/>
    <property type="evidence" value="ECO:0000314"/>
    <property type="project" value="EcoCyc"/>
</dbReference>
<dbReference type="GO" id="GO:0001216">
    <property type="term" value="F:DNA-binding transcription activator activity"/>
    <property type="evidence" value="ECO:0000318"/>
    <property type="project" value="GO_Central"/>
</dbReference>
<dbReference type="GO" id="GO:0009056">
    <property type="term" value="P:catabolic process"/>
    <property type="evidence" value="ECO:0007669"/>
    <property type="project" value="UniProtKB-KW"/>
</dbReference>
<dbReference type="GO" id="GO:0045892">
    <property type="term" value="P:negative regulation of DNA-templated transcription"/>
    <property type="evidence" value="ECO:0000315"/>
    <property type="project" value="EcoCyc"/>
</dbReference>
<dbReference type="GO" id="GO:0045893">
    <property type="term" value="P:positive regulation of DNA-templated transcription"/>
    <property type="evidence" value="ECO:0000318"/>
    <property type="project" value="GO_Central"/>
</dbReference>
<dbReference type="GO" id="GO:0006355">
    <property type="term" value="P:regulation of DNA-templated transcription"/>
    <property type="evidence" value="ECO:0000314"/>
    <property type="project" value="EcoCyc"/>
</dbReference>
<dbReference type="CDD" id="cd00009">
    <property type="entry name" value="AAA"/>
    <property type="match status" value="1"/>
</dbReference>
<dbReference type="CDD" id="cd04877">
    <property type="entry name" value="ACT_TyrR"/>
    <property type="match status" value="1"/>
</dbReference>
<dbReference type="CDD" id="cd00130">
    <property type="entry name" value="PAS"/>
    <property type="match status" value="1"/>
</dbReference>
<dbReference type="FunFam" id="3.40.50.300:FF:000006">
    <property type="entry name" value="DNA-binding transcriptional regulator NtrC"/>
    <property type="match status" value="1"/>
</dbReference>
<dbReference type="FunFam" id="1.10.10.60:FF:000112">
    <property type="entry name" value="TyrR family transcriptional regulator"/>
    <property type="match status" value="1"/>
</dbReference>
<dbReference type="FunFam" id="3.30.70.260:FF:000013">
    <property type="entry name" value="TyrR family transcriptional regulator"/>
    <property type="match status" value="1"/>
</dbReference>
<dbReference type="Gene3D" id="1.10.8.60">
    <property type="match status" value="1"/>
</dbReference>
<dbReference type="Gene3D" id="3.30.70.260">
    <property type="match status" value="1"/>
</dbReference>
<dbReference type="Gene3D" id="1.10.10.60">
    <property type="entry name" value="Homeodomain-like"/>
    <property type="match status" value="1"/>
</dbReference>
<dbReference type="Gene3D" id="3.40.50.300">
    <property type="entry name" value="P-loop containing nucleotide triphosphate hydrolases"/>
    <property type="match status" value="1"/>
</dbReference>
<dbReference type="Gene3D" id="3.30.450.20">
    <property type="entry name" value="PAS domain"/>
    <property type="match status" value="1"/>
</dbReference>
<dbReference type="InterPro" id="IPR003593">
    <property type="entry name" value="AAA+_ATPase"/>
</dbReference>
<dbReference type="InterPro" id="IPR045865">
    <property type="entry name" value="ACT-like_dom_sf"/>
</dbReference>
<dbReference type="InterPro" id="IPR002912">
    <property type="entry name" value="ACT_dom"/>
</dbReference>
<dbReference type="InterPro" id="IPR009057">
    <property type="entry name" value="Homeodomain-like_sf"/>
</dbReference>
<dbReference type="InterPro" id="IPR030828">
    <property type="entry name" value="HTH_TyrR"/>
</dbReference>
<dbReference type="InterPro" id="IPR027417">
    <property type="entry name" value="P-loop_NTPase"/>
</dbReference>
<dbReference type="InterPro" id="IPR000014">
    <property type="entry name" value="PAS"/>
</dbReference>
<dbReference type="InterPro" id="IPR035965">
    <property type="entry name" value="PAS-like_dom_sf"/>
</dbReference>
<dbReference type="InterPro" id="IPR002078">
    <property type="entry name" value="Sigma_54_int"/>
</dbReference>
<dbReference type="InterPro" id="IPR025662">
    <property type="entry name" value="Sigma_54_int_dom_ATP-bd_1"/>
</dbReference>
<dbReference type="InterPro" id="IPR025943">
    <property type="entry name" value="Sigma_54_int_dom_ATP-bd_2"/>
</dbReference>
<dbReference type="InterPro" id="IPR025944">
    <property type="entry name" value="Sigma_54_int_dom_CS"/>
</dbReference>
<dbReference type="NCBIfam" id="TIGR04381">
    <property type="entry name" value="HTH_TypR"/>
    <property type="match status" value="1"/>
</dbReference>
<dbReference type="NCBIfam" id="NF008085">
    <property type="entry name" value="PRK10820.1"/>
    <property type="match status" value="1"/>
</dbReference>
<dbReference type="PANTHER" id="PTHR32071:SF3">
    <property type="entry name" value="HTH-TYPE TRANSCRIPTIONAL REGULATORY PROTEIN TYRR"/>
    <property type="match status" value="1"/>
</dbReference>
<dbReference type="PANTHER" id="PTHR32071">
    <property type="entry name" value="TRANSCRIPTIONAL REGULATORY PROTEIN"/>
    <property type="match status" value="1"/>
</dbReference>
<dbReference type="Pfam" id="PF18024">
    <property type="entry name" value="HTH_50"/>
    <property type="match status" value="1"/>
</dbReference>
<dbReference type="Pfam" id="PF13188">
    <property type="entry name" value="PAS_8"/>
    <property type="match status" value="1"/>
</dbReference>
<dbReference type="Pfam" id="PF00158">
    <property type="entry name" value="Sigma54_activat"/>
    <property type="match status" value="1"/>
</dbReference>
<dbReference type="SMART" id="SM00382">
    <property type="entry name" value="AAA"/>
    <property type="match status" value="1"/>
</dbReference>
<dbReference type="SMART" id="SM00091">
    <property type="entry name" value="PAS"/>
    <property type="match status" value="1"/>
</dbReference>
<dbReference type="SUPFAM" id="SSF55021">
    <property type="entry name" value="ACT-like"/>
    <property type="match status" value="1"/>
</dbReference>
<dbReference type="SUPFAM" id="SSF46689">
    <property type="entry name" value="Homeodomain-like"/>
    <property type="match status" value="1"/>
</dbReference>
<dbReference type="SUPFAM" id="SSF52540">
    <property type="entry name" value="P-loop containing nucleoside triphosphate hydrolases"/>
    <property type="match status" value="1"/>
</dbReference>
<dbReference type="SUPFAM" id="SSF55785">
    <property type="entry name" value="PYP-like sensor domain (PAS domain)"/>
    <property type="match status" value="1"/>
</dbReference>
<dbReference type="PROSITE" id="PS51671">
    <property type="entry name" value="ACT"/>
    <property type="match status" value="1"/>
</dbReference>
<dbReference type="PROSITE" id="PS50112">
    <property type="entry name" value="PAS"/>
    <property type="match status" value="1"/>
</dbReference>
<dbReference type="PROSITE" id="PS00675">
    <property type="entry name" value="SIGMA54_INTERACT_1"/>
    <property type="match status" value="1"/>
</dbReference>
<dbReference type="PROSITE" id="PS00676">
    <property type="entry name" value="SIGMA54_INTERACT_2"/>
    <property type="match status" value="1"/>
</dbReference>
<dbReference type="PROSITE" id="PS00688">
    <property type="entry name" value="SIGMA54_INTERACT_3"/>
    <property type="match status" value="1"/>
</dbReference>
<dbReference type="PROSITE" id="PS50045">
    <property type="entry name" value="SIGMA54_INTERACT_4"/>
    <property type="match status" value="1"/>
</dbReference>
<evidence type="ECO:0000255" key="1">
    <source>
        <dbReference type="PROSITE-ProRule" id="PRU00140"/>
    </source>
</evidence>
<evidence type="ECO:0000255" key="2">
    <source>
        <dbReference type="PROSITE-ProRule" id="PRU00193"/>
    </source>
</evidence>
<evidence type="ECO:0000255" key="3">
    <source>
        <dbReference type="PROSITE-ProRule" id="PRU01007"/>
    </source>
</evidence>
<evidence type="ECO:0000269" key="4">
    <source>
    </source>
</evidence>
<evidence type="ECO:0000269" key="5">
    <source>
    </source>
</evidence>
<evidence type="ECO:0000269" key="6">
    <source>
    </source>
</evidence>
<evidence type="ECO:0000269" key="7">
    <source>
    </source>
</evidence>
<evidence type="ECO:0000269" key="8">
    <source>
    </source>
</evidence>
<evidence type="ECO:0000269" key="9">
    <source>
    </source>
</evidence>
<evidence type="ECO:0000269" key="10">
    <source>
    </source>
</evidence>
<evidence type="ECO:0000269" key="11">
    <source>
    </source>
</evidence>
<evidence type="ECO:0000269" key="12">
    <source>
    </source>
</evidence>
<evidence type="ECO:0000269" key="13">
    <source>
    </source>
</evidence>
<evidence type="ECO:0000269" key="14">
    <source>
    </source>
</evidence>
<evidence type="ECO:0000269" key="15">
    <source>
    </source>
</evidence>
<evidence type="ECO:0000269" key="16">
    <source>
    </source>
</evidence>
<evidence type="ECO:0000269" key="17">
    <source>
    </source>
</evidence>
<evidence type="ECO:0000269" key="18">
    <source>
    </source>
</evidence>
<evidence type="ECO:0000269" key="19">
    <source>
    </source>
</evidence>
<evidence type="ECO:0000269" key="20">
    <source>
    </source>
</evidence>
<evidence type="ECO:0000269" key="21">
    <source>
    </source>
</evidence>
<evidence type="ECO:0000269" key="22">
    <source>
    </source>
</evidence>
<evidence type="ECO:0000269" key="23">
    <source>
    </source>
</evidence>
<evidence type="ECO:0000303" key="24">
    <source>
    </source>
</evidence>
<evidence type="ECO:0000305" key="25"/>
<evidence type="ECO:0000305" key="26">
    <source>
    </source>
</evidence>
<evidence type="ECO:0000305" key="27">
    <source>
    </source>
</evidence>
<evidence type="ECO:0007744" key="28">
    <source>
        <dbReference type="PDB" id="2JHE"/>
    </source>
</evidence>
<evidence type="ECO:0007829" key="29">
    <source>
        <dbReference type="PDB" id="2JHE"/>
    </source>
</evidence>
<gene>
    <name evidence="24" type="primary">tyrR</name>
    <name type="ordered locus">b1323</name>
    <name type="ordered locus">JW1316</name>
</gene>
<organism>
    <name type="scientific">Escherichia coli (strain K12)</name>
    <dbReference type="NCBI Taxonomy" id="83333"/>
    <lineage>
        <taxon>Bacteria</taxon>
        <taxon>Pseudomonadati</taxon>
        <taxon>Pseudomonadota</taxon>
        <taxon>Gammaproteobacteria</taxon>
        <taxon>Enterobacterales</taxon>
        <taxon>Enterobacteriaceae</taxon>
        <taxon>Escherichia</taxon>
    </lineage>
</organism>
<proteinExistence type="evidence at protein level"/>